<protein>
    <recommendedName>
        <fullName>Murein tetrapeptide carboxypeptidase</fullName>
        <ecNumber>3.4.17.13</ecNumber>
    </recommendedName>
    <alternativeName>
        <fullName>LD-carboxypeptidase A</fullName>
    </alternativeName>
    <alternativeName>
        <fullName>Muramoyltetrapeptide carboxypeptidase</fullName>
    </alternativeName>
</protein>
<gene>
    <name type="primary">ldcA</name>
    <name type="ordered locus">Z1955</name>
    <name type="ordered locus">ECs1687</name>
</gene>
<sequence>MSLFHLIAPSGYCIKQHAALRGIQRLTDAGHQVNNVEVIARRCERFAGTETERLEDLNSLARLTTPNTIVLAVRGGYGASRLLADIDWQALVARQQYDPLLICGHSDFTAIQCGLLAQGNVITFSGPMLVANFGADELNTFTEHHFWLALRNETFTIEWQGEGPTCRAEGTLWGGNLAMLISLIGTPWMPKIENGILVLEDINEHPFRVERMLLQLYHAGILPRQKAIILGSFSGSTPNDYDAGYNLESVYAFLRSRLSIPLITGLDFGHEQRTVTLPLGAHAILTNTREGTQLTISGHPVLKM</sequence>
<reference key="1">
    <citation type="journal article" date="2001" name="Nature">
        <title>Genome sequence of enterohaemorrhagic Escherichia coli O157:H7.</title>
        <authorList>
            <person name="Perna N.T."/>
            <person name="Plunkett G. III"/>
            <person name="Burland V."/>
            <person name="Mau B."/>
            <person name="Glasner J.D."/>
            <person name="Rose D.J."/>
            <person name="Mayhew G.F."/>
            <person name="Evans P.S."/>
            <person name="Gregor J."/>
            <person name="Kirkpatrick H.A."/>
            <person name="Posfai G."/>
            <person name="Hackett J."/>
            <person name="Klink S."/>
            <person name="Boutin A."/>
            <person name="Shao Y."/>
            <person name="Miller L."/>
            <person name="Grotbeck E.J."/>
            <person name="Davis N.W."/>
            <person name="Lim A."/>
            <person name="Dimalanta E.T."/>
            <person name="Potamousis K."/>
            <person name="Apodaca J."/>
            <person name="Anantharaman T.S."/>
            <person name="Lin J."/>
            <person name="Yen G."/>
            <person name="Schwartz D.C."/>
            <person name="Welch R.A."/>
            <person name="Blattner F.R."/>
        </authorList>
    </citation>
    <scope>NUCLEOTIDE SEQUENCE [LARGE SCALE GENOMIC DNA]</scope>
    <source>
        <strain>O157:H7 / EDL933 / ATCC 700927 / EHEC</strain>
    </source>
</reference>
<reference key="2">
    <citation type="journal article" date="2001" name="DNA Res.">
        <title>Complete genome sequence of enterohemorrhagic Escherichia coli O157:H7 and genomic comparison with a laboratory strain K-12.</title>
        <authorList>
            <person name="Hayashi T."/>
            <person name="Makino K."/>
            <person name="Ohnishi M."/>
            <person name="Kurokawa K."/>
            <person name="Ishii K."/>
            <person name="Yokoyama K."/>
            <person name="Han C.-G."/>
            <person name="Ohtsubo E."/>
            <person name="Nakayama K."/>
            <person name="Murata T."/>
            <person name="Tanaka M."/>
            <person name="Tobe T."/>
            <person name="Iida T."/>
            <person name="Takami H."/>
            <person name="Honda T."/>
            <person name="Sasakawa C."/>
            <person name="Ogasawara N."/>
            <person name="Yasunaga T."/>
            <person name="Kuhara S."/>
            <person name="Shiba T."/>
            <person name="Hattori M."/>
            <person name="Shinagawa H."/>
        </authorList>
    </citation>
    <scope>NUCLEOTIDE SEQUENCE [LARGE SCALE GENOMIC DNA]</scope>
    <source>
        <strain>O157:H7 / Sakai / RIMD 0509952 / EHEC</strain>
    </source>
</reference>
<organism>
    <name type="scientific">Escherichia coli O157:H7</name>
    <dbReference type="NCBI Taxonomy" id="83334"/>
    <lineage>
        <taxon>Bacteria</taxon>
        <taxon>Pseudomonadati</taxon>
        <taxon>Pseudomonadota</taxon>
        <taxon>Gammaproteobacteria</taxon>
        <taxon>Enterobacterales</taxon>
        <taxon>Enterobacteriaceae</taxon>
        <taxon>Escherichia</taxon>
    </lineage>
</organism>
<proteinExistence type="inferred from homology"/>
<comment type="function">
    <text evidence="1">Releases the terminal D-alanine residue from the cytoplasmic tetrapeptide recycling product L-Ala-gamma-D-Glu-meso-Dap-D-Ala. Can also cleave D-Ala from murein derivatives containing the tetrapeptide, i.e. MurNAc-tetrapeptide, UDP-MurNAc-tetrapeptide, GlcNAc-MurNAc-tetrapeptide, and GlcNAc-anhMurNAc-tetrapeptide. Does not act on murein sacculi or cross-linked muropeptides. The tripeptides produced by the LcdA reaction can then be reused as peptidoglycan building blocks; LcdA is thereby involved in murein recycling (By similarity).</text>
</comment>
<comment type="catalytic activity">
    <reaction>
        <text>N-acetyl-D-glucosaminyl-N-acetylmuramoyl-L-alanyl-meso-2,6-diaminoheptanedioyl-D-alanine + H2O = N-acetyl-D-glucosaminyl-N-acetylmuramoyl-L-alanyl-meso-2,6-diaminoheptanedioate + D-alanine</text>
        <dbReference type="Rhea" id="RHEA:48688"/>
        <dbReference type="ChEBI" id="CHEBI:15377"/>
        <dbReference type="ChEBI" id="CHEBI:57416"/>
        <dbReference type="ChEBI" id="CHEBI:233808"/>
        <dbReference type="ChEBI" id="CHEBI:233809"/>
        <dbReference type="EC" id="3.4.17.13"/>
    </reaction>
</comment>
<comment type="pathway">
    <text>Cell wall biogenesis; peptidoglycan recycling.</text>
</comment>
<comment type="subcellular location">
    <subcellularLocation>
        <location evidence="1">Cytoplasm</location>
    </subcellularLocation>
</comment>
<comment type="similarity">
    <text evidence="2">Belongs to the peptidase S66 family.</text>
</comment>
<name>LDCA_ECO57</name>
<accession>Q8XDJ8</accession>
<feature type="chain" id="PRO_0000172839" description="Murein tetrapeptide carboxypeptidase">
    <location>
        <begin position="1"/>
        <end position="304"/>
    </location>
</feature>
<feature type="active site" description="Nucleophile" evidence="1">
    <location>
        <position position="106"/>
    </location>
</feature>
<feature type="active site" description="Charge relay system" evidence="1">
    <location>
        <position position="200"/>
    </location>
</feature>
<feature type="active site" description="Charge relay system" evidence="1">
    <location>
        <position position="270"/>
    </location>
</feature>
<dbReference type="EC" id="3.4.17.13"/>
<dbReference type="EMBL" id="AE005174">
    <property type="protein sequence ID" value="AAG56043.1"/>
    <property type="molecule type" value="Genomic_DNA"/>
</dbReference>
<dbReference type="EMBL" id="BA000007">
    <property type="protein sequence ID" value="BAB35111.2"/>
    <property type="molecule type" value="Genomic_DNA"/>
</dbReference>
<dbReference type="PIR" id="G85697">
    <property type="entry name" value="G85697"/>
</dbReference>
<dbReference type="PIR" id="G90839">
    <property type="entry name" value="G90839"/>
</dbReference>
<dbReference type="RefSeq" id="NP_309715.1">
    <property type="nucleotide sequence ID" value="NC_002695.1"/>
</dbReference>
<dbReference type="RefSeq" id="WP_000051572.1">
    <property type="nucleotide sequence ID" value="NZ_VOAI01000042.1"/>
</dbReference>
<dbReference type="SMR" id="Q8XDJ8"/>
<dbReference type="STRING" id="155864.Z1955"/>
<dbReference type="MEROPS" id="S66.002"/>
<dbReference type="GeneID" id="913179"/>
<dbReference type="KEGG" id="ece:Z1955"/>
<dbReference type="KEGG" id="ecs:ECs_1687"/>
<dbReference type="PATRIC" id="fig|386585.9.peg.1785"/>
<dbReference type="eggNOG" id="COG1619">
    <property type="taxonomic scope" value="Bacteria"/>
</dbReference>
<dbReference type="HOGENOM" id="CLU_034346_0_1_6"/>
<dbReference type="OMA" id="MLTQWRL"/>
<dbReference type="UniPathway" id="UPA00544"/>
<dbReference type="Proteomes" id="UP000000558">
    <property type="component" value="Chromosome"/>
</dbReference>
<dbReference type="Proteomes" id="UP000002519">
    <property type="component" value="Chromosome"/>
</dbReference>
<dbReference type="GO" id="GO:0005737">
    <property type="term" value="C:cytoplasm"/>
    <property type="evidence" value="ECO:0007669"/>
    <property type="project" value="UniProtKB-SubCell"/>
</dbReference>
<dbReference type="GO" id="GO:0106415">
    <property type="term" value="F:muramoyltetrapeptide carboxypeptidase activity"/>
    <property type="evidence" value="ECO:0007669"/>
    <property type="project" value="UniProtKB-EC"/>
</dbReference>
<dbReference type="GO" id="GO:0008236">
    <property type="term" value="F:serine-type peptidase activity"/>
    <property type="evidence" value="ECO:0007669"/>
    <property type="project" value="UniProtKB-KW"/>
</dbReference>
<dbReference type="GO" id="GO:0071555">
    <property type="term" value="P:cell wall organization"/>
    <property type="evidence" value="ECO:0007669"/>
    <property type="project" value="UniProtKB-KW"/>
</dbReference>
<dbReference type="GO" id="GO:0009252">
    <property type="term" value="P:peptidoglycan biosynthetic process"/>
    <property type="evidence" value="ECO:0007669"/>
    <property type="project" value="UniProtKB-KW"/>
</dbReference>
<dbReference type="GO" id="GO:0009254">
    <property type="term" value="P:peptidoglycan turnover"/>
    <property type="evidence" value="ECO:0007669"/>
    <property type="project" value="UniProtKB-UniPathway"/>
</dbReference>
<dbReference type="GO" id="GO:0006508">
    <property type="term" value="P:proteolysis"/>
    <property type="evidence" value="ECO:0007669"/>
    <property type="project" value="UniProtKB-KW"/>
</dbReference>
<dbReference type="GO" id="GO:0008360">
    <property type="term" value="P:regulation of cell shape"/>
    <property type="evidence" value="ECO:0007669"/>
    <property type="project" value="UniProtKB-KW"/>
</dbReference>
<dbReference type="CDD" id="cd07025">
    <property type="entry name" value="Peptidase_S66"/>
    <property type="match status" value="1"/>
</dbReference>
<dbReference type="FunFam" id="3.40.50.10740:FF:000001">
    <property type="entry name" value="Murein tetrapeptide carboxypeptidase"/>
    <property type="match status" value="1"/>
</dbReference>
<dbReference type="FunFam" id="3.50.30.60:FF:000001">
    <property type="entry name" value="Murein tetrapeptide carboxypeptidase"/>
    <property type="match status" value="1"/>
</dbReference>
<dbReference type="Gene3D" id="3.40.50.10740">
    <property type="entry name" value="Class I glutamine amidotransferase-like"/>
    <property type="match status" value="1"/>
</dbReference>
<dbReference type="Gene3D" id="3.50.30.60">
    <property type="entry name" value="LD-carboxypeptidase A C-terminal domain-like"/>
    <property type="match status" value="1"/>
</dbReference>
<dbReference type="InterPro" id="IPR027461">
    <property type="entry name" value="Carboxypeptidase_A_C_sf"/>
</dbReference>
<dbReference type="InterPro" id="IPR029062">
    <property type="entry name" value="Class_I_gatase-like"/>
</dbReference>
<dbReference type="InterPro" id="IPR027478">
    <property type="entry name" value="LdcA_N"/>
</dbReference>
<dbReference type="InterPro" id="IPR040449">
    <property type="entry name" value="Peptidase_S66_N"/>
</dbReference>
<dbReference type="InterPro" id="IPR040921">
    <property type="entry name" value="Peptidase_S66C"/>
</dbReference>
<dbReference type="InterPro" id="IPR003507">
    <property type="entry name" value="S66_fam"/>
</dbReference>
<dbReference type="NCBIfam" id="NF008424">
    <property type="entry name" value="PRK11253.1"/>
    <property type="match status" value="1"/>
</dbReference>
<dbReference type="PANTHER" id="PTHR30237">
    <property type="entry name" value="MURAMOYLTETRAPEPTIDE CARBOXYPEPTIDASE"/>
    <property type="match status" value="1"/>
</dbReference>
<dbReference type="PANTHER" id="PTHR30237:SF2">
    <property type="entry name" value="MUREIN TETRAPEPTIDE CARBOXYPEPTIDASE"/>
    <property type="match status" value="1"/>
</dbReference>
<dbReference type="Pfam" id="PF02016">
    <property type="entry name" value="Peptidase_S66"/>
    <property type="match status" value="1"/>
</dbReference>
<dbReference type="Pfam" id="PF17676">
    <property type="entry name" value="Peptidase_S66C"/>
    <property type="match status" value="1"/>
</dbReference>
<dbReference type="PIRSF" id="PIRSF028757">
    <property type="entry name" value="LD-carboxypeptidase"/>
    <property type="match status" value="1"/>
</dbReference>
<dbReference type="SUPFAM" id="SSF52317">
    <property type="entry name" value="Class I glutamine amidotransferase-like"/>
    <property type="match status" value="1"/>
</dbReference>
<dbReference type="SUPFAM" id="SSF141986">
    <property type="entry name" value="LD-carboxypeptidase A C-terminal domain-like"/>
    <property type="match status" value="1"/>
</dbReference>
<evidence type="ECO:0000250" key="1"/>
<evidence type="ECO:0000305" key="2"/>
<keyword id="KW-0121">Carboxypeptidase</keyword>
<keyword id="KW-0133">Cell shape</keyword>
<keyword id="KW-0961">Cell wall biogenesis/degradation</keyword>
<keyword id="KW-0963">Cytoplasm</keyword>
<keyword id="KW-0378">Hydrolase</keyword>
<keyword id="KW-0573">Peptidoglycan synthesis</keyword>
<keyword id="KW-0645">Protease</keyword>
<keyword id="KW-1185">Reference proteome</keyword>
<keyword id="KW-0720">Serine protease</keyword>